<name>AFP_ASPGI</name>
<dbReference type="EMBL" id="X60771">
    <property type="protein sequence ID" value="CAA43181.1"/>
    <property type="molecule type" value="Genomic_DNA"/>
</dbReference>
<dbReference type="EMBL" id="X53432">
    <property type="protein sequence ID" value="CAA37523.1"/>
    <property type="molecule type" value="mRNA"/>
</dbReference>
<dbReference type="PIR" id="S44064">
    <property type="entry name" value="S44064"/>
</dbReference>
<dbReference type="PDB" id="1AFP">
    <property type="method" value="NMR"/>
    <property type="chains" value="A=44-94"/>
</dbReference>
<dbReference type="PDBsum" id="1AFP"/>
<dbReference type="SMR" id="P17737"/>
<dbReference type="EvolutionaryTrace" id="P17737"/>
<dbReference type="GO" id="GO:0005576">
    <property type="term" value="C:extracellular region"/>
    <property type="evidence" value="ECO:0007669"/>
    <property type="project" value="UniProtKB-SubCell"/>
</dbReference>
<dbReference type="GO" id="GO:0030430">
    <property type="term" value="C:host cell cytoplasm"/>
    <property type="evidence" value="ECO:0007669"/>
    <property type="project" value="UniProtKB-SubCell"/>
</dbReference>
<dbReference type="GO" id="GO:0050832">
    <property type="term" value="P:defense response to fungus"/>
    <property type="evidence" value="ECO:0007669"/>
    <property type="project" value="UniProtKB-KW"/>
</dbReference>
<dbReference type="GO" id="GO:0031640">
    <property type="term" value="P:killing of cells of another organism"/>
    <property type="evidence" value="ECO:0007669"/>
    <property type="project" value="UniProtKB-KW"/>
</dbReference>
<dbReference type="Gene3D" id="2.40.50.60">
    <property type="entry name" value="Antifungal protein domain"/>
    <property type="match status" value="1"/>
</dbReference>
<dbReference type="InterPro" id="IPR023112">
    <property type="entry name" value="Antifungal-protein_dom_sf"/>
</dbReference>
<dbReference type="InterPro" id="IPR022706">
    <property type="entry name" value="Antifungal_prot"/>
</dbReference>
<dbReference type="Pfam" id="PF11402">
    <property type="entry name" value="Antifungal_prot"/>
    <property type="match status" value="1"/>
</dbReference>
<dbReference type="SUPFAM" id="SSF57598">
    <property type="entry name" value="Antifungal protein (AGAFP)"/>
    <property type="match status" value="1"/>
</dbReference>
<organism>
    <name type="scientific">Aspergillus giganteus</name>
    <dbReference type="NCBI Taxonomy" id="5060"/>
    <lineage>
        <taxon>Eukaryota</taxon>
        <taxon>Fungi</taxon>
        <taxon>Dikarya</taxon>
        <taxon>Ascomycota</taxon>
        <taxon>Pezizomycotina</taxon>
        <taxon>Eurotiomycetes</taxon>
        <taxon>Eurotiomycetidae</taxon>
        <taxon>Eurotiales</taxon>
        <taxon>Aspergillaceae</taxon>
        <taxon>Aspergillus</taxon>
        <taxon>Aspergillus subgen. Fumigati</taxon>
    </lineage>
</organism>
<sequence length="94" mass="9994">MKFVSLASLGFALVAALGAVATPVEADSLTAGGLDARDESAVLATYNGKCYKKDNICKYKAQSGKTAICKCYVKKCPRDGAKCEFDSYKGKCYC</sequence>
<accession>P17737</accession>
<proteinExistence type="evidence at protein level"/>
<protein>
    <recommendedName>
        <fullName>Antifungal protein</fullName>
    </recommendedName>
</protein>
<keyword id="KW-0002">3D-structure</keyword>
<keyword id="KW-0929">Antimicrobial</keyword>
<keyword id="KW-0903">Direct protein sequencing</keyword>
<keyword id="KW-1015">Disulfide bond</keyword>
<keyword id="KW-0295">Fungicide</keyword>
<keyword id="KW-1035">Host cytoplasm</keyword>
<keyword id="KW-0964">Secreted</keyword>
<keyword id="KW-0732">Signal</keyword>
<gene>
    <name type="primary">afp</name>
</gene>
<comment type="function">
    <text evidence="1">Antifungal protein that acts as an inhibitor of growth of a variety of fungal species.</text>
</comment>
<comment type="subcellular location">
    <subcellularLocation>
        <location evidence="1">Secreted</location>
    </subcellularLocation>
    <subcellularLocation>
        <location evidence="1">Host cytoplasm</location>
    </subcellularLocation>
</comment>
<comment type="similarity">
    <text evidence="4">Belongs to the antifungal protein pafB family.</text>
</comment>
<reference key="1">
    <citation type="journal article" date="1994" name="Curr. Genet.">
        <title>Molecular cloning, sequence analysis and expression of the gene encoding an antifungal-protein from Aspergillus giganteus.</title>
        <authorList>
            <person name="Wnendt S."/>
            <person name="Ulbrich N."/>
            <person name="Stahl U."/>
        </authorList>
    </citation>
    <scope>NUCLEOTIDE SEQUENCE [GENOMIC DNA]</scope>
    <source>
        <strain>MDH 18894</strain>
    </source>
</reference>
<reference key="2">
    <citation type="journal article" date="1990" name="Nucleic Acids Res.">
        <title>Cloning and nucleotide sequence of a cDNA encoding the antifungal-protein of Aspergillus giganteus and preliminary characterization of the native gene.</title>
        <authorList>
            <person name="Wnendt S."/>
            <person name="Ulbrich N."/>
            <person name="Stahl U."/>
        </authorList>
    </citation>
    <scope>NUCLEOTIDE SEQUENCE [MRNA] OF 35-94</scope>
    <source>
        <strain>MDH 18894</strain>
        <tissue>Mycelium</tissue>
    </source>
</reference>
<reference key="3">
    <citation type="journal article" date="1990" name="Eur. J. Biochem.">
        <title>Amino acid sequence and disulfide bridges of an antifungal protein isolated from Aspergillus giganteus.</title>
        <authorList>
            <person name="Nakaya K."/>
            <person name="Omata K."/>
            <person name="Okahashi I."/>
            <person name="Nakamura Y."/>
            <person name="Kolckenbrock H."/>
            <person name="Ulbrich N."/>
        </authorList>
    </citation>
    <scope>PROTEIN SEQUENCE OF 44-94</scope>
    <scope>DISULFIDE BONDS</scope>
    <source>
        <strain>MDH 18894</strain>
    </source>
</reference>
<reference key="4">
    <citation type="journal article" date="1995" name="Biochemistry">
        <title>NMR solution structure of the antifungal protein from Aspergillus giganteus: evidence for cysteine pairing isomerism.</title>
        <authorList>
            <person name="Campos-Olivas R."/>
            <person name="Bruix M."/>
            <person name="Santoro J."/>
            <person name="Lacadena J."/>
            <person name="Martinez del Pozo A."/>
            <person name="Gavilanes J.G."/>
            <person name="Rico M."/>
        </authorList>
    </citation>
    <scope>STRUCTURE BY NMR</scope>
</reference>
<feature type="signal peptide" evidence="2">
    <location>
        <begin position="1"/>
        <end position="21"/>
    </location>
</feature>
<feature type="propeptide" id="PRO_0000020639" evidence="2">
    <location>
        <begin position="22"/>
        <end position="43"/>
    </location>
</feature>
<feature type="chain" id="PRO_0000020640" description="Antifungal protein" evidence="3">
    <location>
        <begin position="44"/>
        <end position="94"/>
    </location>
</feature>
<feature type="disulfide bond" evidence="3">
    <location>
        <begin position="50"/>
        <end position="76"/>
    </location>
</feature>
<feature type="disulfide bond" evidence="3">
    <location>
        <begin position="57"/>
        <end position="83"/>
    </location>
</feature>
<feature type="disulfide bond" evidence="3">
    <location>
        <begin position="69"/>
        <end position="71"/>
    </location>
</feature>
<feature type="disulfide bond" evidence="3">
    <location>
        <begin position="92"/>
        <end position="94"/>
    </location>
</feature>
<feature type="sequence conflict" description="In Ref. 2; CAA37523." evidence="4" ref="2">
    <original>DARDESA</original>
    <variation>MQEMRAR</variation>
    <location>
        <begin position="35"/>
        <end position="41"/>
    </location>
</feature>
<feature type="strand" evidence="5">
    <location>
        <begin position="48"/>
        <end position="51"/>
    </location>
</feature>
<feature type="turn" evidence="5">
    <location>
        <begin position="52"/>
        <end position="55"/>
    </location>
</feature>
<feature type="strand" evidence="5">
    <location>
        <begin position="56"/>
        <end position="59"/>
    </location>
</feature>
<feature type="strand" evidence="5">
    <location>
        <begin position="81"/>
        <end position="84"/>
    </location>
</feature>
<feature type="turn" evidence="5">
    <location>
        <begin position="87"/>
        <end position="89"/>
    </location>
</feature>
<evidence type="ECO:0000250" key="1">
    <source>
        <dbReference type="UniProtKB" id="D0EXD3"/>
    </source>
</evidence>
<evidence type="ECO:0000255" key="2"/>
<evidence type="ECO:0000269" key="3">
    <source>
    </source>
</evidence>
<evidence type="ECO:0000305" key="4"/>
<evidence type="ECO:0007829" key="5">
    <source>
        <dbReference type="PDB" id="1AFP"/>
    </source>
</evidence>